<gene>
    <name type="primary">jmjd6-a</name>
    <name type="synonym">ptdsr-a</name>
</gene>
<comment type="function">
    <text evidence="2 3">Dioxygenase that can both act as a arginine demethylase and a lysyl-hydroxylase. Acts as a lysyl-hydroxylase that catalyzes 5-hydroxylation on specific lysine residues of target proteins such as u2af2/u2af65 and LUC7L2. Regulates RNA splicing by mediating 5-hydroxylation of u2af2/u2af65, affecting the pre-mRNA splicing activity of u2af2/u2af65. Hydroxylates its own N-terminus, which is required for homooligomerization. In addition to peptidyl-lysine 5-dioxygenase activity, may act as an RNA hydroxylase, as suggested by its ability to bind single strand RNA. Also acts as an arginine demethylase which preferentially demethylates asymmetric dimethylation. Demethylates histone H3 at 'Arg-2' (H3R2me) and histone H4 at 'Arg-3' (H4R3me), including mono-, symmetric di- and asymmetric dimethylated forms, thereby playing a role in histone code. However, histone arginine demethylation may not constitute the primary activity in vivo. In collaboration with brd4, interacts with the positive transcription elongation factor b (P-TEFb) complex in its active form to regulate polymerase II promoter-proximal pause release for transcriptional activation of a large cohort of genes. Demethylates other arginine methylated-proteins such as esr1. Has no histone lysine demethylase activity (By similarity). Required for differentiation of multiple organs during embryogenesis. Acts as a key regulator of hematopoietic differentiation (By similarity).</text>
</comment>
<comment type="catalytic activity">
    <reaction evidence="2">
        <text>L-lysyl-[protein] + 2-oxoglutarate + O2 = (5S)-5-hydroxy-L-lysyl-[protein] + succinate + CO2</text>
        <dbReference type="Rhea" id="RHEA:58360"/>
        <dbReference type="Rhea" id="RHEA-COMP:9752"/>
        <dbReference type="Rhea" id="RHEA-COMP:15144"/>
        <dbReference type="ChEBI" id="CHEBI:15379"/>
        <dbReference type="ChEBI" id="CHEBI:16526"/>
        <dbReference type="ChEBI" id="CHEBI:16810"/>
        <dbReference type="ChEBI" id="CHEBI:29969"/>
        <dbReference type="ChEBI" id="CHEBI:30031"/>
        <dbReference type="ChEBI" id="CHEBI:141843"/>
    </reaction>
</comment>
<comment type="catalytic activity">
    <reaction evidence="2">
        <text>N(omega),N(omega)'-dimethyl-L-arginyl-[protein] + 2 2-oxoglutarate + 2 O2 = L-arginyl-[protein] + 2 formaldehyde + 2 succinate + 2 CO2</text>
        <dbReference type="Rhea" id="RHEA:58348"/>
        <dbReference type="Rhea" id="RHEA-COMP:10532"/>
        <dbReference type="Rhea" id="RHEA-COMP:11992"/>
        <dbReference type="ChEBI" id="CHEBI:15379"/>
        <dbReference type="ChEBI" id="CHEBI:16526"/>
        <dbReference type="ChEBI" id="CHEBI:16810"/>
        <dbReference type="ChEBI" id="CHEBI:16842"/>
        <dbReference type="ChEBI" id="CHEBI:29965"/>
        <dbReference type="ChEBI" id="CHEBI:30031"/>
        <dbReference type="ChEBI" id="CHEBI:88221"/>
    </reaction>
</comment>
<comment type="catalytic activity">
    <reaction evidence="2">
        <text>N(omega),N(omega)'-dimethyl-L-arginyl-[protein] + 2-oxoglutarate + O2 = N(omega)-methyl-L-arginyl-[protein] + formaldehyde + succinate + CO2</text>
        <dbReference type="Rhea" id="RHEA:58472"/>
        <dbReference type="Rhea" id="RHEA-COMP:11990"/>
        <dbReference type="Rhea" id="RHEA-COMP:11992"/>
        <dbReference type="ChEBI" id="CHEBI:15379"/>
        <dbReference type="ChEBI" id="CHEBI:16526"/>
        <dbReference type="ChEBI" id="CHEBI:16810"/>
        <dbReference type="ChEBI" id="CHEBI:16842"/>
        <dbReference type="ChEBI" id="CHEBI:30031"/>
        <dbReference type="ChEBI" id="CHEBI:65280"/>
        <dbReference type="ChEBI" id="CHEBI:88221"/>
    </reaction>
</comment>
<comment type="catalytic activity">
    <reaction evidence="2">
        <text>a 5'-end methyltriphosphate-guanosine-ribonucleotide-snRNA + 2-oxoglutarate + O2 = a 5'-end triphospho-guanosine-ribonucleotide-snRNA + formaldehyde + succinate + CO2 + H(+)</text>
        <dbReference type="Rhea" id="RHEA:58784"/>
        <dbReference type="Rhea" id="RHEA-COMP:15220"/>
        <dbReference type="Rhea" id="RHEA-COMP:15221"/>
        <dbReference type="ChEBI" id="CHEBI:15378"/>
        <dbReference type="ChEBI" id="CHEBI:15379"/>
        <dbReference type="ChEBI" id="CHEBI:16526"/>
        <dbReference type="ChEBI" id="CHEBI:16810"/>
        <dbReference type="ChEBI" id="CHEBI:16842"/>
        <dbReference type="ChEBI" id="CHEBI:30031"/>
        <dbReference type="ChEBI" id="CHEBI:138278"/>
        <dbReference type="ChEBI" id="CHEBI:142789"/>
    </reaction>
</comment>
<comment type="cofactor">
    <cofactor evidence="2">
        <name>Fe(2+)</name>
        <dbReference type="ChEBI" id="CHEBI:29033"/>
    </cofactor>
    <text evidence="2">Binds 1 Fe(2+) ion per subunit.</text>
</comment>
<comment type="subcellular location">
    <subcellularLocation>
        <location evidence="2">Nucleus</location>
        <location evidence="2">Nucleoplasm</location>
    </subcellularLocation>
    <subcellularLocation>
        <location evidence="2">Nucleus</location>
        <location evidence="2">Nucleolus</location>
    </subcellularLocation>
    <subcellularLocation>
        <location evidence="2">Cytoplasm</location>
    </subcellularLocation>
</comment>
<comment type="domain">
    <text evidence="2">The nuclear localization signal motifs are necessary and sufficient to target it into the nucleus.</text>
</comment>
<comment type="PTM">
    <text evidence="2">Hydroxylates its own N-terminus; hydroxylation is required for homooligomerization.</text>
</comment>
<comment type="similarity">
    <text evidence="6">Belongs to the JMJD6 family.</text>
</comment>
<evidence type="ECO:0000250" key="1"/>
<evidence type="ECO:0000250" key="2">
    <source>
        <dbReference type="UniProtKB" id="Q6NYC1"/>
    </source>
</evidence>
<evidence type="ECO:0000250" key="3">
    <source>
        <dbReference type="UniProtKB" id="Q9ERI5"/>
    </source>
</evidence>
<evidence type="ECO:0000255" key="4">
    <source>
        <dbReference type="PROSITE-ProRule" id="PRU00538"/>
    </source>
</evidence>
<evidence type="ECO:0000256" key="5">
    <source>
        <dbReference type="SAM" id="MobiDB-lite"/>
    </source>
</evidence>
<evidence type="ECO:0000305" key="6"/>
<reference key="1">
    <citation type="submission" date="2004-06" db="EMBL/GenBank/DDBJ databases">
        <authorList>
            <consortium name="NIH - Xenopus Gene Collection (XGC) project"/>
        </authorList>
    </citation>
    <scope>NUCLEOTIDE SEQUENCE [LARGE SCALE MRNA]</scope>
    <source>
        <tissue>Spleen</tissue>
    </source>
</reference>
<sequence>MNHKSKKRIKEAKRSARPELKDSQDWCRHNYCEVFSLNPSTVRDNVERADDAHLSIEEFIDRYEKPYKPVVIVNATADWPAQEKWTLERLKRKYRNQKFKCGEDNDGYSVKMKMKYYIDYMEGTRDDSPLYIFDSSYGEHPKRKKLLEDYEVPKYFRDDLFQFAGEKRRPPYRWFVMGPARSGTGIHIDPLGTSAWNSLVHGHKRWCLFPTNTPRELIKVTRDEGGNQQDEAITWFNVIYPRTQLPSWPPEFKPLEILQKPGETVFVPGGWWHVVLNLDTAIAVTQNFASCSNFPVVWHKTVRGRPKLSRKWYRILKQERPELAALADTVDLQEATGIASDSSSDSSSSSSSSSSESCSEDDLSSGAEMMSHRKKKRKICSVMENGDSTTQDDCVSKERSSSR</sequence>
<protein>
    <recommendedName>
        <fullName>Bifunctional arginine demethylase and lysyl-hydroxylase JMJD6-A</fullName>
        <ecNumber>1.14.11.-</ecNumber>
    </recommendedName>
    <alternativeName>
        <fullName>Histone arginine demethylase JMJD6-A</fullName>
    </alternativeName>
    <alternativeName>
        <fullName>JmjC domain-containing protein 6-A</fullName>
    </alternativeName>
    <alternativeName>
        <fullName>Jumonji domain-containing protein 6-A</fullName>
    </alternativeName>
    <alternativeName>
        <fullName>Lysyl-hydroxylase JMJD6-A</fullName>
    </alternativeName>
    <alternativeName>
        <fullName>Peptide-lysine 5-dioxygenase JMJD6-A</fullName>
    </alternativeName>
    <alternativeName>
        <fullName>Phosphatidylserine receptor-A</fullName>
        <shortName>Protein PTDSR-A</shortName>
    </alternativeName>
</protein>
<organism>
    <name type="scientific">Xenopus laevis</name>
    <name type="common">African clawed frog</name>
    <dbReference type="NCBI Taxonomy" id="8355"/>
    <lineage>
        <taxon>Eukaryota</taxon>
        <taxon>Metazoa</taxon>
        <taxon>Chordata</taxon>
        <taxon>Craniata</taxon>
        <taxon>Vertebrata</taxon>
        <taxon>Euteleostomi</taxon>
        <taxon>Amphibia</taxon>
        <taxon>Batrachia</taxon>
        <taxon>Anura</taxon>
        <taxon>Pipoidea</taxon>
        <taxon>Pipidae</taxon>
        <taxon>Xenopodinae</taxon>
        <taxon>Xenopus</taxon>
        <taxon>Xenopus</taxon>
    </lineage>
</organism>
<name>JMD6A_XENLA</name>
<feature type="chain" id="PRO_0000129375" description="Bifunctional arginine demethylase and lysyl-hydroxylase JMJD6-A">
    <location>
        <begin position="1"/>
        <end position="403"/>
    </location>
</feature>
<feature type="domain" description="JmjC" evidence="4">
    <location>
        <begin position="141"/>
        <end position="305"/>
    </location>
</feature>
<feature type="region of interest" description="Disordered" evidence="5">
    <location>
        <begin position="337"/>
        <end position="403"/>
    </location>
</feature>
<feature type="short sequence motif" description="Nuclear localization signal 1" evidence="2">
    <location>
        <begin position="6"/>
        <end position="10"/>
    </location>
</feature>
<feature type="short sequence motif" description="Nuclear localization signal 2" evidence="2">
    <location>
        <begin position="91"/>
        <end position="95"/>
    </location>
</feature>
<feature type="short sequence motif" description="Nuclear localization signal 3" evidence="2">
    <location>
        <begin position="141"/>
        <end position="145"/>
    </location>
</feature>
<feature type="short sequence motif" description="Nuclear localization signal 4" evidence="2">
    <location>
        <begin position="167"/>
        <end position="170"/>
    </location>
</feature>
<feature type="short sequence motif" description="Nuclear localization signal 5" evidence="2">
    <location>
        <begin position="373"/>
        <end position="378"/>
    </location>
</feature>
<feature type="compositionally biased region" description="Low complexity" evidence="5">
    <location>
        <begin position="340"/>
        <end position="357"/>
    </location>
</feature>
<feature type="compositionally biased region" description="Basic and acidic residues" evidence="5">
    <location>
        <begin position="394"/>
        <end position="403"/>
    </location>
</feature>
<feature type="binding site" evidence="1">
    <location>
        <position position="184"/>
    </location>
    <ligand>
        <name>substrate</name>
    </ligand>
</feature>
<feature type="binding site" evidence="4">
    <location>
        <position position="187"/>
    </location>
    <ligand>
        <name>Fe cation</name>
        <dbReference type="ChEBI" id="CHEBI:24875"/>
        <note>catalytic</note>
    </ligand>
</feature>
<feature type="binding site" evidence="4">
    <location>
        <position position="189"/>
    </location>
    <ligand>
        <name>Fe cation</name>
        <dbReference type="ChEBI" id="CHEBI:24875"/>
        <note>catalytic</note>
    </ligand>
</feature>
<feature type="binding site" evidence="2">
    <location>
        <position position="197"/>
    </location>
    <ligand>
        <name>2-oxoglutarate</name>
        <dbReference type="ChEBI" id="CHEBI:16810"/>
    </ligand>
</feature>
<feature type="binding site" evidence="1">
    <location>
        <position position="204"/>
    </location>
    <ligand>
        <name>substrate</name>
    </ligand>
</feature>
<feature type="binding site" evidence="4">
    <location>
        <position position="273"/>
    </location>
    <ligand>
        <name>Fe cation</name>
        <dbReference type="ChEBI" id="CHEBI:24875"/>
        <note>catalytic</note>
    </ligand>
</feature>
<feature type="binding site" evidence="2">
    <location>
        <position position="285"/>
    </location>
    <ligand>
        <name>2-oxoglutarate</name>
        <dbReference type="ChEBI" id="CHEBI:16810"/>
    </ligand>
</feature>
<keyword id="KW-0156">Chromatin regulator</keyword>
<keyword id="KW-0963">Cytoplasm</keyword>
<keyword id="KW-0217">Developmental protein</keyword>
<keyword id="KW-0221">Differentiation</keyword>
<keyword id="KW-0223">Dioxygenase</keyword>
<keyword id="KW-0408">Iron</keyword>
<keyword id="KW-0479">Metal-binding</keyword>
<keyword id="KW-0507">mRNA processing</keyword>
<keyword id="KW-0508">mRNA splicing</keyword>
<keyword id="KW-0539">Nucleus</keyword>
<keyword id="KW-0560">Oxidoreductase</keyword>
<keyword id="KW-1185">Reference proteome</keyword>
<keyword id="KW-0694">RNA-binding</keyword>
<keyword id="KW-0804">Transcription</keyword>
<keyword id="KW-0805">Transcription regulation</keyword>
<proteinExistence type="evidence at transcript level"/>
<dbReference type="EC" id="1.14.11.-"/>
<dbReference type="EMBL" id="BC073581">
    <property type="protein sequence ID" value="AAH73581.1"/>
    <property type="molecule type" value="mRNA"/>
</dbReference>
<dbReference type="RefSeq" id="NP_001085948.1">
    <property type="nucleotide sequence ID" value="NM_001092479.1"/>
</dbReference>
<dbReference type="SMR" id="Q6GND3"/>
<dbReference type="DNASU" id="444377"/>
<dbReference type="GeneID" id="444377"/>
<dbReference type="KEGG" id="xla:444377"/>
<dbReference type="AGR" id="Xenbase:XB-GENE-6255376"/>
<dbReference type="CTD" id="444377"/>
<dbReference type="Xenbase" id="XB-GENE-6255376">
    <property type="gene designation" value="jmjd6.L"/>
</dbReference>
<dbReference type="OMA" id="NAWVAMR"/>
<dbReference type="OrthoDB" id="424465at2759"/>
<dbReference type="Proteomes" id="UP000186698">
    <property type="component" value="Chromosome 9_10L"/>
</dbReference>
<dbReference type="Bgee" id="444377">
    <property type="expression patterns" value="Expressed in egg cell and 19 other cell types or tissues"/>
</dbReference>
<dbReference type="GO" id="GO:0005737">
    <property type="term" value="C:cytoplasm"/>
    <property type="evidence" value="ECO:0000250"/>
    <property type="project" value="UniProtKB"/>
</dbReference>
<dbReference type="GO" id="GO:0005730">
    <property type="term" value="C:nucleolus"/>
    <property type="evidence" value="ECO:0000250"/>
    <property type="project" value="UniProtKB"/>
</dbReference>
<dbReference type="GO" id="GO:0005654">
    <property type="term" value="C:nucleoplasm"/>
    <property type="evidence" value="ECO:0000250"/>
    <property type="project" value="UniProtKB"/>
</dbReference>
<dbReference type="GO" id="GO:0005634">
    <property type="term" value="C:nucleus"/>
    <property type="evidence" value="ECO:0000250"/>
    <property type="project" value="UniProtKB"/>
</dbReference>
<dbReference type="GO" id="GO:0032452">
    <property type="term" value="F:histone demethylase activity"/>
    <property type="evidence" value="ECO:0000250"/>
    <property type="project" value="UniProtKB"/>
</dbReference>
<dbReference type="GO" id="GO:0033746">
    <property type="term" value="F:histone H3R2 demethylase activity"/>
    <property type="evidence" value="ECO:0000250"/>
    <property type="project" value="UniProtKB"/>
</dbReference>
<dbReference type="GO" id="GO:0033749">
    <property type="term" value="F:histone H4R3 demethylase activity"/>
    <property type="evidence" value="ECO:0000250"/>
    <property type="project" value="UniProtKB"/>
</dbReference>
<dbReference type="GO" id="GO:0046872">
    <property type="term" value="F:metal ion binding"/>
    <property type="evidence" value="ECO:0007669"/>
    <property type="project" value="UniProtKB-KW"/>
</dbReference>
<dbReference type="GO" id="GO:0106140">
    <property type="term" value="F:P-TEFb complex binding"/>
    <property type="evidence" value="ECO:0000318"/>
    <property type="project" value="GO_Central"/>
</dbReference>
<dbReference type="GO" id="GO:0070815">
    <property type="term" value="F:peptidyl-lysine 5-dioxygenase activity"/>
    <property type="evidence" value="ECO:0000250"/>
    <property type="project" value="UniProtKB"/>
</dbReference>
<dbReference type="GO" id="GO:0003727">
    <property type="term" value="F:single-stranded RNA binding"/>
    <property type="evidence" value="ECO:0000250"/>
    <property type="project" value="UniProtKB"/>
</dbReference>
<dbReference type="GO" id="GO:0030154">
    <property type="term" value="P:cell differentiation"/>
    <property type="evidence" value="ECO:0007669"/>
    <property type="project" value="UniProtKB-KW"/>
</dbReference>
<dbReference type="GO" id="GO:0006397">
    <property type="term" value="P:mRNA processing"/>
    <property type="evidence" value="ECO:0007669"/>
    <property type="project" value="UniProtKB-KW"/>
</dbReference>
<dbReference type="GO" id="GO:0018395">
    <property type="term" value="P:peptidyl-lysine hydroxylation to 5-hydroxy-L-lysine"/>
    <property type="evidence" value="ECO:0000250"/>
    <property type="project" value="UniProtKB"/>
</dbReference>
<dbReference type="GO" id="GO:0006909">
    <property type="term" value="P:phagocytosis"/>
    <property type="evidence" value="ECO:0000318"/>
    <property type="project" value="GO_Central"/>
</dbReference>
<dbReference type="GO" id="GO:0051260">
    <property type="term" value="P:protein homooligomerization"/>
    <property type="evidence" value="ECO:0000250"/>
    <property type="project" value="UniProtKB"/>
</dbReference>
<dbReference type="GO" id="GO:0048024">
    <property type="term" value="P:regulation of mRNA splicing, via spliceosome"/>
    <property type="evidence" value="ECO:0000250"/>
    <property type="project" value="UniProtKB"/>
</dbReference>
<dbReference type="GO" id="GO:0008380">
    <property type="term" value="P:RNA splicing"/>
    <property type="evidence" value="ECO:0007669"/>
    <property type="project" value="UniProtKB-KW"/>
</dbReference>
<dbReference type="GO" id="GO:0002040">
    <property type="term" value="P:sprouting angiogenesis"/>
    <property type="evidence" value="ECO:0000250"/>
    <property type="project" value="UniProtKB"/>
</dbReference>
<dbReference type="FunFam" id="1.20.1280.270:FF:000001">
    <property type="entry name" value="Bifunctional arginine demethylase and lysyl-hydroxylase JMJD6"/>
    <property type="match status" value="1"/>
</dbReference>
<dbReference type="FunFam" id="2.60.120.650:FF:000010">
    <property type="entry name" value="bifunctional arginine demethylase and lysyl-hydroxylase JMJD6 isoform X2"/>
    <property type="match status" value="1"/>
</dbReference>
<dbReference type="Gene3D" id="1.20.1280.270">
    <property type="match status" value="1"/>
</dbReference>
<dbReference type="Gene3D" id="2.60.120.650">
    <property type="entry name" value="Cupin"/>
    <property type="match status" value="1"/>
</dbReference>
<dbReference type="InterPro" id="IPR003347">
    <property type="entry name" value="JmjC_dom"/>
</dbReference>
<dbReference type="InterPro" id="IPR050910">
    <property type="entry name" value="JMJD6_ArgDemeth/LysHydrox"/>
</dbReference>
<dbReference type="PANTHER" id="PTHR12480">
    <property type="entry name" value="ARGININE DEMETHYLASE AND LYSYL-HYDROXYLASE JMJD"/>
    <property type="match status" value="1"/>
</dbReference>
<dbReference type="PANTHER" id="PTHR12480:SF32">
    <property type="entry name" value="BIFUNCTIONAL ARGININE DEMETHYLASE AND LYSYL-HYDROXYLASE JMJD6"/>
    <property type="match status" value="1"/>
</dbReference>
<dbReference type="Pfam" id="PF02373">
    <property type="entry name" value="JmjC"/>
    <property type="match status" value="1"/>
</dbReference>
<dbReference type="SMART" id="SM00558">
    <property type="entry name" value="JmjC"/>
    <property type="match status" value="1"/>
</dbReference>
<dbReference type="SUPFAM" id="SSF51197">
    <property type="entry name" value="Clavaminate synthase-like"/>
    <property type="match status" value="1"/>
</dbReference>
<dbReference type="PROSITE" id="PS51184">
    <property type="entry name" value="JMJC"/>
    <property type="match status" value="1"/>
</dbReference>
<accession>Q6GND3</accession>